<gene>
    <name type="primary">pdf1</name>
    <name evidence="8" type="synonym">yhc1</name>
    <name type="ORF">SPBC530.12c</name>
</gene>
<evidence type="ECO:0000250" key="1"/>
<evidence type="ECO:0000250" key="2">
    <source>
        <dbReference type="UniProtKB" id="P45478"/>
    </source>
</evidence>
<evidence type="ECO:0000250" key="3">
    <source>
        <dbReference type="UniProtKB" id="P53223"/>
    </source>
</evidence>
<evidence type="ECO:0000255" key="4"/>
<evidence type="ECO:0000269" key="5">
    <source>
    </source>
</evidence>
<evidence type="ECO:0000303" key="6">
    <source>
    </source>
</evidence>
<evidence type="ECO:0000305" key="7"/>
<evidence type="ECO:0000312" key="8">
    <source>
        <dbReference type="PomBase" id="SPBC530.12c"/>
    </source>
</evidence>
<keyword id="KW-1015">Disulfide bond</keyword>
<keyword id="KW-0256">Endoplasmic reticulum</keyword>
<keyword id="KW-0325">Glycoprotein</keyword>
<keyword id="KW-0378">Hydrolase</keyword>
<keyword id="KW-0472">Membrane</keyword>
<keyword id="KW-1185">Reference proteome</keyword>
<keyword id="KW-0732">Signal</keyword>
<keyword id="KW-0812">Transmembrane</keyword>
<keyword id="KW-1133">Transmembrane helix</keyword>
<keyword id="KW-0926">Vacuole</keyword>
<name>PDF1_SCHPO</name>
<accession>O59747</accession>
<sequence length="622" mass="71196">MLSCSSFLIFFLFSWVLLPMKSFAIPIISLDKVRLAINDGASEQLPVVIWHGLGDTPTSFTLTEVSQRVQKLTKGAVYAIRVGDNEFEDIKAGYLGKLEDQLDEVCDLIGNEDSLSNGFYALGLSQGGLFLRALAQTCDAAKIRSLITLGSPHSGINTIPGCSPTNLICKAVVHSILGLGIWHSWIQNHVVQAQYYRTEKQYDKYLENNKFLTHLNNEVLHDNYTRNIEKLKELDNLVAVSFERDDIVEPPYSTGFGWINETTGENIEMEDFVLYESLGLKDLVNQGKLETISFPGRHLQMRWGDFDALVLKYFKDEKEEKTELEESTRPSNFLSTYFVSPLVSAIDGTVDYLHGKSLFPEKRNFKELTMRKRSIVTPEDSEEVYPYISEFVAASNVSEEKGPKSFANLAFITIFSHFFYHIDDMWRSTLGLFSLIPQIIGIIYLTVMFTGRELDTFMQFGGQVVNEFINYVVKVSLKYPRPADIEYGVGYGMPSSHSQFMGFFSAYMIAWDYKYRRSQCFSMLSFAKYAIYLTLSTFVCSSRYLLDFHYLTQVVYGYMIGFGVGLFWVYLVGKLRSLGVTKWLLSLPPLQFFYIKDTIPHSKDNHKRQWLESKQFKNQKSN</sequence>
<dbReference type="EC" id="3.1.2.22"/>
<dbReference type="EC" id="3.6.1.43"/>
<dbReference type="EMBL" id="CU329671">
    <property type="protein sequence ID" value="CAA19178.2"/>
    <property type="molecule type" value="Genomic_DNA"/>
</dbReference>
<dbReference type="PIR" id="T40528">
    <property type="entry name" value="T40528"/>
</dbReference>
<dbReference type="RefSeq" id="NP_595325.2">
    <property type="nucleotide sequence ID" value="NM_001021232.2"/>
</dbReference>
<dbReference type="SMR" id="O59747"/>
<dbReference type="BioGRID" id="277420">
    <property type="interactions" value="3"/>
</dbReference>
<dbReference type="FunCoup" id="O59747">
    <property type="interactions" value="422"/>
</dbReference>
<dbReference type="STRING" id="284812.O59747"/>
<dbReference type="ESTHER" id="schpo-SPBC530.12C">
    <property type="family name" value="Palmitoyl-protein_thioesterase"/>
</dbReference>
<dbReference type="GlyCosmos" id="O59747">
    <property type="glycosylation" value="3 sites, No reported glycans"/>
</dbReference>
<dbReference type="iPTMnet" id="O59747"/>
<dbReference type="PaxDb" id="4896-SPBC530.12c.1"/>
<dbReference type="EnsemblFungi" id="SPBC530.12c.1">
    <property type="protein sequence ID" value="SPBC530.12c.1:pep"/>
    <property type="gene ID" value="SPBC530.12c"/>
</dbReference>
<dbReference type="GeneID" id="2540904"/>
<dbReference type="KEGG" id="spo:2540904"/>
<dbReference type="PomBase" id="SPBC530.12c">
    <property type="gene designation" value="pdf1"/>
</dbReference>
<dbReference type="VEuPathDB" id="FungiDB:SPBC530.12c"/>
<dbReference type="eggNOG" id="KOG2541">
    <property type="taxonomic scope" value="Eukaryota"/>
</dbReference>
<dbReference type="eggNOG" id="KOG3146">
    <property type="taxonomic scope" value="Eukaryota"/>
</dbReference>
<dbReference type="HOGENOM" id="CLU_439507_0_0_1"/>
<dbReference type="InParanoid" id="O59747"/>
<dbReference type="OMA" id="MQFGGQV"/>
<dbReference type="BRENDA" id="3.1.2.22">
    <property type="organism ID" value="5613"/>
</dbReference>
<dbReference type="Reactome" id="R-SPO-446199">
    <property type="pathway name" value="Synthesis of Dolichyl-phosphate"/>
</dbReference>
<dbReference type="PRO" id="PR:O59747"/>
<dbReference type="Proteomes" id="UP000002485">
    <property type="component" value="Chromosome II"/>
</dbReference>
<dbReference type="GO" id="GO:0005783">
    <property type="term" value="C:endoplasmic reticulum"/>
    <property type="evidence" value="ECO:0007005"/>
    <property type="project" value="PomBase"/>
</dbReference>
<dbReference type="GO" id="GO:0005789">
    <property type="term" value="C:endoplasmic reticulum membrane"/>
    <property type="evidence" value="ECO:0000318"/>
    <property type="project" value="GO_Central"/>
</dbReference>
<dbReference type="GO" id="GO:0005773">
    <property type="term" value="C:vacuole"/>
    <property type="evidence" value="ECO:0007669"/>
    <property type="project" value="UniProtKB-SubCell"/>
</dbReference>
<dbReference type="GO" id="GO:0047874">
    <property type="term" value="F:dolichyldiphosphatase activity"/>
    <property type="evidence" value="ECO:0000318"/>
    <property type="project" value="GO_Central"/>
</dbReference>
<dbReference type="GO" id="GO:0008474">
    <property type="term" value="F:palmitoyl-(protein) hydrolase activity"/>
    <property type="evidence" value="ECO:0000266"/>
    <property type="project" value="PomBase"/>
</dbReference>
<dbReference type="GO" id="GO:0046467">
    <property type="term" value="P:membrane lipid biosynthetic process"/>
    <property type="evidence" value="ECO:0000266"/>
    <property type="project" value="PomBase"/>
</dbReference>
<dbReference type="GO" id="GO:0006487">
    <property type="term" value="P:protein N-linked glycosylation"/>
    <property type="evidence" value="ECO:0000318"/>
    <property type="project" value="GO_Central"/>
</dbReference>
<dbReference type="CDD" id="cd03382">
    <property type="entry name" value="PAP2_dolichyldiphosphatase"/>
    <property type="match status" value="1"/>
</dbReference>
<dbReference type="Gene3D" id="3.40.50.1820">
    <property type="entry name" value="alpha/beta hydrolase"/>
    <property type="match status" value="1"/>
</dbReference>
<dbReference type="Gene3D" id="1.20.144.10">
    <property type="entry name" value="Phosphatidic acid phosphatase type 2/haloperoxidase"/>
    <property type="match status" value="1"/>
</dbReference>
<dbReference type="InterPro" id="IPR029058">
    <property type="entry name" value="AB_hydrolase_fold"/>
</dbReference>
<dbReference type="InterPro" id="IPR039667">
    <property type="entry name" value="Dolichyldiphosphatase_PAP2"/>
</dbReference>
<dbReference type="InterPro" id="IPR036938">
    <property type="entry name" value="P_Acid_Pase_2/haloperoxi_sf"/>
</dbReference>
<dbReference type="InterPro" id="IPR000326">
    <property type="entry name" value="P_Acid_Pase_2/haloperoxidase"/>
</dbReference>
<dbReference type="PANTHER" id="PTHR11247:SF1">
    <property type="entry name" value="DOLICHYLDIPHOSPHATASE 1"/>
    <property type="match status" value="1"/>
</dbReference>
<dbReference type="PANTHER" id="PTHR11247">
    <property type="entry name" value="PALMITOYL-PROTEIN THIOESTERASE/DOLICHYLDIPHOSPHATASE 1"/>
    <property type="match status" value="1"/>
</dbReference>
<dbReference type="Pfam" id="PF02089">
    <property type="entry name" value="Palm_thioest"/>
    <property type="match status" value="1"/>
</dbReference>
<dbReference type="Pfam" id="PF01569">
    <property type="entry name" value="PAP2"/>
    <property type="match status" value="1"/>
</dbReference>
<dbReference type="SMART" id="SM00014">
    <property type="entry name" value="acidPPc"/>
    <property type="match status" value="1"/>
</dbReference>
<dbReference type="SUPFAM" id="SSF48317">
    <property type="entry name" value="Acid phosphatase/Vanadium-dependent haloperoxidase"/>
    <property type="match status" value="1"/>
</dbReference>
<dbReference type="SUPFAM" id="SSF53474">
    <property type="entry name" value="alpha/beta-Hydrolases"/>
    <property type="match status" value="1"/>
</dbReference>
<organism>
    <name type="scientific">Schizosaccharomyces pombe (strain 972 / ATCC 24843)</name>
    <name type="common">Fission yeast</name>
    <dbReference type="NCBI Taxonomy" id="284812"/>
    <lineage>
        <taxon>Eukaryota</taxon>
        <taxon>Fungi</taxon>
        <taxon>Dikarya</taxon>
        <taxon>Ascomycota</taxon>
        <taxon>Taphrinomycotina</taxon>
        <taxon>Schizosaccharomycetes</taxon>
        <taxon>Schizosaccharomycetales</taxon>
        <taxon>Schizosaccharomycetaceae</taxon>
        <taxon>Schizosaccharomyces</taxon>
    </lineage>
</organism>
<comment type="function">
    <text evidence="2 3 5">Essential protein. Removes thioester-linked fatty acyl groups such as palmitate from modified cysteine residues in proteins or peptides during vacuolar degradation. Required for efficient N-glycosylation. Necessary for maintaining optimal levels of dolichol-linked oligosaccharides.</text>
</comment>
<comment type="catalytic activity">
    <reaction>
        <text>S-hexadecanoyl-L-cysteinyl-[protein] + H2O = L-cysteinyl-[protein] + hexadecanoate + H(+)</text>
        <dbReference type="Rhea" id="RHEA:19233"/>
        <dbReference type="Rhea" id="RHEA-COMP:10131"/>
        <dbReference type="Rhea" id="RHEA-COMP:11032"/>
        <dbReference type="ChEBI" id="CHEBI:7896"/>
        <dbReference type="ChEBI" id="CHEBI:15377"/>
        <dbReference type="ChEBI" id="CHEBI:15378"/>
        <dbReference type="ChEBI" id="CHEBI:29950"/>
        <dbReference type="ChEBI" id="CHEBI:74151"/>
        <dbReference type="EC" id="3.1.2.22"/>
    </reaction>
</comment>
<comment type="catalytic activity">
    <reaction evidence="3">
        <text>a di-trans,poly-cis-dolichyl diphosphate + H2O = a di-trans,poly-cis-dolichyl phosphate + phosphate + H(+)</text>
        <dbReference type="Rhea" id="RHEA:14385"/>
        <dbReference type="Rhea" id="RHEA-COMP:19498"/>
        <dbReference type="Rhea" id="RHEA-COMP:19506"/>
        <dbReference type="ChEBI" id="CHEBI:15377"/>
        <dbReference type="ChEBI" id="CHEBI:15378"/>
        <dbReference type="ChEBI" id="CHEBI:43474"/>
        <dbReference type="ChEBI" id="CHEBI:57497"/>
        <dbReference type="ChEBI" id="CHEBI:57683"/>
        <dbReference type="EC" id="3.6.1.43"/>
    </reaction>
</comment>
<comment type="subcellular location">
    <subcellularLocation>
        <location evidence="4">Vacuole</location>
    </subcellularLocation>
    <subcellularLocation>
        <location evidence="4">Endoplasmic reticulum membrane</location>
        <topology evidence="4">Multi-pass membrane protein</topology>
    </subcellularLocation>
</comment>
<comment type="PTM">
    <text evidence="5">Proteolytically cleaved, possibly by krp1.</text>
</comment>
<comment type="disruption phenotype">
    <text evidence="5">Cells show lethality and the dolichyldiphosphatase domain alone can rescue the lethal phenotype, but the growth rate of these cells is slower than in wild-type cells. Cells containing wild-type palmitoyl-protein thioesterase (PPT) and inactivated dolichyldiphosphatase reverse the growth retardation phenotype. Cells containing no functional copy of palmitoyl-protein thioesterase are viable, but abnormally sensitive to sodium orthovanadate and elevated external pH. These sensitivities are reversed when the cells are transformed with plasmid containing wild-type PPT and an inactivating mutation in the dolichyldiphosphatase domain.</text>
</comment>
<comment type="similarity">
    <text evidence="4">In the N-terminal section; belongs to the palmitoyl-protein thioesterase family.</text>
</comment>
<comment type="similarity">
    <text evidence="4">In the C-terminal section; belongs to the dolichyldiphosphatase family.</text>
</comment>
<feature type="signal peptide" evidence="4">
    <location>
        <begin position="1"/>
        <end position="24"/>
    </location>
</feature>
<feature type="chain" id="PRO_0000349152" description="Palmitoyl-protein thioesterase-dolichyl pyrophosphate phosphatase fusion 1">
    <location>
        <begin position="25"/>
        <end position="622"/>
    </location>
</feature>
<feature type="chain" id="PRO_0000349153" description="Palmitoyl-protein thioesterase">
    <location>
        <begin position="25"/>
        <end status="unknown"/>
    </location>
</feature>
<feature type="chain" id="PRO_0000349154" description="Dolichyldiphosphatase">
    <location>
        <begin status="unknown"/>
        <end position="622"/>
    </location>
</feature>
<feature type="topological domain" description="Lumenal" evidence="4">
    <location>
        <begin position="25"/>
        <end position="405"/>
    </location>
</feature>
<feature type="transmembrane region" description="Helical" evidence="4">
    <location>
        <begin position="406"/>
        <end position="426"/>
    </location>
</feature>
<feature type="topological domain" description="Cytoplasmic" evidence="4">
    <location>
        <begin position="427"/>
        <end position="428"/>
    </location>
</feature>
<feature type="transmembrane region" description="Helical" evidence="4">
    <location>
        <begin position="429"/>
        <end position="449"/>
    </location>
</feature>
<feature type="topological domain" description="Lumenal" evidence="4">
    <location>
        <begin position="450"/>
        <end position="488"/>
    </location>
</feature>
<feature type="transmembrane region" description="Helical" evidence="4">
    <location>
        <begin position="489"/>
        <end position="511"/>
    </location>
</feature>
<feature type="topological domain" description="Cytoplasmic" evidence="4">
    <location>
        <begin position="512"/>
        <end position="519"/>
    </location>
</feature>
<feature type="transmembrane region" description="Helical" evidence="4">
    <location>
        <begin position="520"/>
        <end position="540"/>
    </location>
</feature>
<feature type="topological domain" description="Lumenal" evidence="4">
    <location>
        <begin position="541"/>
        <end position="552"/>
    </location>
</feature>
<feature type="transmembrane region" description="Helical" evidence="4">
    <location>
        <begin position="553"/>
        <end position="573"/>
    </location>
</feature>
<feature type="topological domain" description="Cytoplasmic" evidence="4">
    <location>
        <begin position="574"/>
        <end position="622"/>
    </location>
</feature>
<feature type="active site" evidence="1">
    <location>
        <position position="125"/>
    </location>
</feature>
<feature type="active site" evidence="1">
    <location>
        <position position="245"/>
    </location>
</feature>
<feature type="active site" evidence="1">
    <location>
        <position position="298"/>
    </location>
</feature>
<feature type="site" description="Crucial for post-translational processing" evidence="1">
    <location>
        <position position="373"/>
    </location>
</feature>
<feature type="glycosylation site" description="N-linked (GlcNAc...) asparagine" evidence="4">
    <location>
        <position position="223"/>
    </location>
</feature>
<feature type="glycosylation site" description="N-linked (GlcNAc...) asparagine" evidence="4">
    <location>
        <position position="260"/>
    </location>
</feature>
<feature type="glycosylation site" description="N-linked (GlcNAc...) asparagine" evidence="4">
    <location>
        <position position="396"/>
    </location>
</feature>
<feature type="disulfide bond" evidence="1">
    <location>
        <begin position="106"/>
        <end position="138"/>
    </location>
</feature>
<feature type="mutagenesis site" description="Sensitive to vanadate and elevation of external pH." evidence="5">
    <original>S</original>
    <variation>A</variation>
    <location>
        <position position="125"/>
    </location>
</feature>
<feature type="mutagenesis site" description="Sensitive to vanadate and elevation of external pH." evidence="5">
    <original>D</original>
    <variation>A</variation>
    <location>
        <position position="245"/>
    </location>
</feature>
<feature type="mutagenesis site" description="Lethal." evidence="5">
    <location>
        <begin position="322"/>
        <end position="622"/>
    </location>
</feature>
<feature type="mutagenesis site" description="No prevention of cleavage of the linker domain, but increases the ratio of the unprocessed from the processed form." evidence="5">
    <original>R</original>
    <variation>A</variation>
    <location>
        <position position="363"/>
    </location>
</feature>
<feature type="mutagenesis site" description="Abolished cleavage of the linker domain." evidence="5">
    <original>R</original>
    <variation>A</variation>
    <location>
        <position position="373"/>
    </location>
</feature>
<feature type="mutagenesis site" description="Lethal." evidence="5">
    <original>H</original>
    <variation>A</variation>
    <location>
        <position position="497"/>
    </location>
</feature>
<proteinExistence type="evidence at protein level"/>
<reference key="1">
    <citation type="journal article" date="2002" name="Nature">
        <title>The genome sequence of Schizosaccharomyces pombe.</title>
        <authorList>
            <person name="Wood V."/>
            <person name="Gwilliam R."/>
            <person name="Rajandream M.A."/>
            <person name="Lyne M.H."/>
            <person name="Lyne R."/>
            <person name="Stewart A."/>
            <person name="Sgouros J.G."/>
            <person name="Peat N."/>
            <person name="Hayles J."/>
            <person name="Baker S.G."/>
            <person name="Basham D."/>
            <person name="Bowman S."/>
            <person name="Brooks K."/>
            <person name="Brown D."/>
            <person name="Brown S."/>
            <person name="Chillingworth T."/>
            <person name="Churcher C.M."/>
            <person name="Collins M."/>
            <person name="Connor R."/>
            <person name="Cronin A."/>
            <person name="Davis P."/>
            <person name="Feltwell T."/>
            <person name="Fraser A."/>
            <person name="Gentles S."/>
            <person name="Goble A."/>
            <person name="Hamlin N."/>
            <person name="Harris D.E."/>
            <person name="Hidalgo J."/>
            <person name="Hodgson G."/>
            <person name="Holroyd S."/>
            <person name="Hornsby T."/>
            <person name="Howarth S."/>
            <person name="Huckle E.J."/>
            <person name="Hunt S."/>
            <person name="Jagels K."/>
            <person name="James K.D."/>
            <person name="Jones L."/>
            <person name="Jones M."/>
            <person name="Leather S."/>
            <person name="McDonald S."/>
            <person name="McLean J."/>
            <person name="Mooney P."/>
            <person name="Moule S."/>
            <person name="Mungall K.L."/>
            <person name="Murphy L.D."/>
            <person name="Niblett D."/>
            <person name="Odell C."/>
            <person name="Oliver K."/>
            <person name="O'Neil S."/>
            <person name="Pearson D."/>
            <person name="Quail M.A."/>
            <person name="Rabbinowitsch E."/>
            <person name="Rutherford K.M."/>
            <person name="Rutter S."/>
            <person name="Saunders D."/>
            <person name="Seeger K."/>
            <person name="Sharp S."/>
            <person name="Skelton J."/>
            <person name="Simmonds M.N."/>
            <person name="Squares R."/>
            <person name="Squares S."/>
            <person name="Stevens K."/>
            <person name="Taylor K."/>
            <person name="Taylor R.G."/>
            <person name="Tivey A."/>
            <person name="Walsh S.V."/>
            <person name="Warren T."/>
            <person name="Whitehead S."/>
            <person name="Woodward J.R."/>
            <person name="Volckaert G."/>
            <person name="Aert R."/>
            <person name="Robben J."/>
            <person name="Grymonprez B."/>
            <person name="Weltjens I."/>
            <person name="Vanstreels E."/>
            <person name="Rieger M."/>
            <person name="Schaefer M."/>
            <person name="Mueller-Auer S."/>
            <person name="Gabel C."/>
            <person name="Fuchs M."/>
            <person name="Duesterhoeft A."/>
            <person name="Fritzc C."/>
            <person name="Holzer E."/>
            <person name="Moestl D."/>
            <person name="Hilbert H."/>
            <person name="Borzym K."/>
            <person name="Langer I."/>
            <person name="Beck A."/>
            <person name="Lehrach H."/>
            <person name="Reinhardt R."/>
            <person name="Pohl T.M."/>
            <person name="Eger P."/>
            <person name="Zimmermann W."/>
            <person name="Wedler H."/>
            <person name="Wambutt R."/>
            <person name="Purnelle B."/>
            <person name="Goffeau A."/>
            <person name="Cadieu E."/>
            <person name="Dreano S."/>
            <person name="Gloux S."/>
            <person name="Lelaure V."/>
            <person name="Mottier S."/>
            <person name="Galibert F."/>
            <person name="Aves S.J."/>
            <person name="Xiang Z."/>
            <person name="Hunt C."/>
            <person name="Moore K."/>
            <person name="Hurst S.M."/>
            <person name="Lucas M."/>
            <person name="Rochet M."/>
            <person name="Gaillardin C."/>
            <person name="Tallada V.A."/>
            <person name="Garzon A."/>
            <person name="Thode G."/>
            <person name="Daga R.R."/>
            <person name="Cruzado L."/>
            <person name="Jimenez J."/>
            <person name="Sanchez M."/>
            <person name="del Rey F."/>
            <person name="Benito J."/>
            <person name="Dominguez A."/>
            <person name="Revuelta J.L."/>
            <person name="Moreno S."/>
            <person name="Armstrong J."/>
            <person name="Forsburg S.L."/>
            <person name="Cerutti L."/>
            <person name="Lowe T."/>
            <person name="McCombie W.R."/>
            <person name="Paulsen I."/>
            <person name="Potashkin J."/>
            <person name="Shpakovski G.V."/>
            <person name="Ussery D."/>
            <person name="Barrell B.G."/>
            <person name="Nurse P."/>
        </authorList>
    </citation>
    <scope>NUCLEOTIDE SEQUENCE [LARGE SCALE GENOMIC DNA]</scope>
    <source>
        <strain>972 / ATCC 24843</strain>
    </source>
</reference>
<reference key="2">
    <citation type="journal article" date="2011" name="Science">
        <title>Comparative functional genomics of the fission yeasts.</title>
        <authorList>
            <person name="Rhind N."/>
            <person name="Chen Z."/>
            <person name="Yassour M."/>
            <person name="Thompson D.A."/>
            <person name="Haas B.J."/>
            <person name="Habib N."/>
            <person name="Wapinski I."/>
            <person name="Roy S."/>
            <person name="Lin M.F."/>
            <person name="Heiman D.I."/>
            <person name="Young S.K."/>
            <person name="Furuya K."/>
            <person name="Guo Y."/>
            <person name="Pidoux A."/>
            <person name="Chen H.M."/>
            <person name="Robbertse B."/>
            <person name="Goldberg J.M."/>
            <person name="Aoki K."/>
            <person name="Bayne E.H."/>
            <person name="Berlin A.M."/>
            <person name="Desjardins C.A."/>
            <person name="Dobbs E."/>
            <person name="Dukaj L."/>
            <person name="Fan L."/>
            <person name="FitzGerald M.G."/>
            <person name="French C."/>
            <person name="Gujja S."/>
            <person name="Hansen K."/>
            <person name="Keifenheim D."/>
            <person name="Levin J.Z."/>
            <person name="Mosher R.A."/>
            <person name="Mueller C.A."/>
            <person name="Pfiffner J."/>
            <person name="Priest M."/>
            <person name="Russ C."/>
            <person name="Smialowska A."/>
            <person name="Swoboda P."/>
            <person name="Sykes S.M."/>
            <person name="Vaughn M."/>
            <person name="Vengrova S."/>
            <person name="Yoder R."/>
            <person name="Zeng Q."/>
            <person name="Allshire R."/>
            <person name="Baulcombe D."/>
            <person name="Birren B.W."/>
            <person name="Brown W."/>
            <person name="Ekwall K."/>
            <person name="Kellis M."/>
            <person name="Leatherwood J."/>
            <person name="Levin H."/>
            <person name="Margalit H."/>
            <person name="Martienssen R."/>
            <person name="Nieduszynski C.A."/>
            <person name="Spatafora J.W."/>
            <person name="Friedman N."/>
            <person name="Dalgaard J.Z."/>
            <person name="Baumann P."/>
            <person name="Niki H."/>
            <person name="Regev A."/>
            <person name="Nusbaum C."/>
        </authorList>
    </citation>
    <scope>REVISION OF GENE MODEL</scope>
</reference>
<reference evidence="7" key="3">
    <citation type="journal article" date="2004" name="Eukaryot. Cell">
        <title>pdf1, a palmitoyl protein thioesterase 1 ortholog in Schizosaccharomyces pombe: a yeast model of infantile Batten disease.</title>
        <authorList>
            <person name="Cho S.K."/>
            <person name="Hofmann S.L."/>
        </authorList>
    </citation>
    <scope>FUNCTION</scope>
    <scope>SUBCELLULAR LOCATION</scope>
    <scope>CLEAVAGE</scope>
    <scope>MUTAGENESIS OF SER-125; ASP-245; 322-THR--ASN-622; ARG-363; ARG-373 AND HIS-497</scope>
    <scope>DISRUPTION PHENOTYPE</scope>
</reference>
<reference evidence="7" key="4">
    <citation type="journal article" date="2006" name="Nat. Biotechnol.">
        <title>ORFeome cloning and global analysis of protein localization in the fission yeast Schizosaccharomyces pombe.</title>
        <authorList>
            <person name="Matsuyama A."/>
            <person name="Arai R."/>
            <person name="Yashiroda Y."/>
            <person name="Shirai A."/>
            <person name="Kamata A."/>
            <person name="Sekido S."/>
            <person name="Kobayashi Y."/>
            <person name="Hashimoto A."/>
            <person name="Hamamoto M."/>
            <person name="Hiraoka Y."/>
            <person name="Horinouchi S."/>
            <person name="Yoshida M."/>
        </authorList>
    </citation>
    <scope>SUBCELLULAR LOCATION [LARGE SCALE ANALYSIS]</scope>
</reference>
<protein>
    <recommendedName>
        <fullName>Palmitoyl-protein thioesterase-dolichyl pyrophosphate phosphatase fusion 1</fullName>
    </recommendedName>
    <component>
        <recommendedName>
            <fullName evidence="2 6">Palmitoyl-protein thioesterase</fullName>
            <shortName evidence="2">PPT</shortName>
            <ecNumber>3.1.2.22</ecNumber>
        </recommendedName>
        <alternativeName>
            <fullName evidence="2">Palmitoyl-protein hydrolase</fullName>
        </alternativeName>
    </component>
    <component>
        <recommendedName>
            <fullName evidence="3">Dolichyldiphosphatase</fullName>
            <ecNumber>3.6.1.43</ecNumber>
        </recommendedName>
        <alternativeName>
            <fullName evidence="3 6">Dolichyl pyrophosphate phosphatase</fullName>
        </alternativeName>
    </component>
</protein>